<organism>
    <name type="scientific">Koribacter versatilis (strain Ellin345)</name>
    <dbReference type="NCBI Taxonomy" id="204669"/>
    <lineage>
        <taxon>Bacteria</taxon>
        <taxon>Pseudomonadati</taxon>
        <taxon>Acidobacteriota</taxon>
        <taxon>Terriglobia</taxon>
        <taxon>Terriglobales</taxon>
        <taxon>Candidatus Korobacteraceae</taxon>
        <taxon>Candidatus Korobacter</taxon>
    </lineage>
</organism>
<feature type="chain" id="PRO_0000321707" description="Ribosome maturation factor RimM">
    <location>
        <begin position="1"/>
        <end position="209"/>
    </location>
</feature>
<feature type="domain" description="PRC barrel" evidence="1">
    <location>
        <begin position="103"/>
        <end position="178"/>
    </location>
</feature>
<feature type="region of interest" description="Disordered" evidence="2">
    <location>
        <begin position="184"/>
        <end position="209"/>
    </location>
</feature>
<feature type="compositionally biased region" description="Basic and acidic residues" evidence="2">
    <location>
        <begin position="187"/>
        <end position="209"/>
    </location>
</feature>
<comment type="function">
    <text evidence="1">An accessory protein needed during the final step in the assembly of 30S ribosomal subunit, possibly for assembly of the head region. Essential for efficient processing of 16S rRNA. May be needed both before and after RbfA during the maturation of 16S rRNA. It has affinity for free ribosomal 30S subunits but not for 70S ribosomes.</text>
</comment>
<comment type="subunit">
    <text evidence="1">Binds ribosomal protein uS19.</text>
</comment>
<comment type="subcellular location">
    <subcellularLocation>
        <location evidence="1">Cytoplasm</location>
    </subcellularLocation>
</comment>
<comment type="domain">
    <text evidence="1">The PRC barrel domain binds ribosomal protein uS19.</text>
</comment>
<comment type="similarity">
    <text evidence="1">Belongs to the RimM family.</text>
</comment>
<reference key="1">
    <citation type="journal article" date="2009" name="Appl. Environ. Microbiol.">
        <title>Three genomes from the phylum Acidobacteria provide insight into the lifestyles of these microorganisms in soils.</title>
        <authorList>
            <person name="Ward N.L."/>
            <person name="Challacombe J.F."/>
            <person name="Janssen P.H."/>
            <person name="Henrissat B."/>
            <person name="Coutinho P.M."/>
            <person name="Wu M."/>
            <person name="Xie G."/>
            <person name="Haft D.H."/>
            <person name="Sait M."/>
            <person name="Badger J."/>
            <person name="Barabote R.D."/>
            <person name="Bradley B."/>
            <person name="Brettin T.S."/>
            <person name="Brinkac L.M."/>
            <person name="Bruce D."/>
            <person name="Creasy T."/>
            <person name="Daugherty S.C."/>
            <person name="Davidsen T.M."/>
            <person name="DeBoy R.T."/>
            <person name="Detter J.C."/>
            <person name="Dodson R.J."/>
            <person name="Durkin A.S."/>
            <person name="Ganapathy A."/>
            <person name="Gwinn-Giglio M."/>
            <person name="Han C.S."/>
            <person name="Khouri H."/>
            <person name="Kiss H."/>
            <person name="Kothari S.P."/>
            <person name="Madupu R."/>
            <person name="Nelson K.E."/>
            <person name="Nelson W.C."/>
            <person name="Paulsen I."/>
            <person name="Penn K."/>
            <person name="Ren Q."/>
            <person name="Rosovitz M.J."/>
            <person name="Selengut J.D."/>
            <person name="Shrivastava S."/>
            <person name="Sullivan S.A."/>
            <person name="Tapia R."/>
            <person name="Thompson L.S."/>
            <person name="Watkins K.L."/>
            <person name="Yang Q."/>
            <person name="Yu C."/>
            <person name="Zafar N."/>
            <person name="Zhou L."/>
            <person name="Kuske C.R."/>
        </authorList>
    </citation>
    <scope>NUCLEOTIDE SEQUENCE [LARGE SCALE GENOMIC DNA]</scope>
    <source>
        <strain>Ellin345</strain>
    </source>
</reference>
<sequence>MSSTSSTNTDDFITIARIQKTQGRVGEVFSELFTDFPELFEQRHHLYVLPEKGERRELELEDHWFHKGGVVLKFQGIETIDDAEKLLRSEVQIPRQDRAQLEEGATYVSDLVGCELFEIHGSEARKVGVVADVDFSAGEAPLLVVKGDREHLIPYVESFLKSTDFKAKRIEMVLPQGMLELDAPLSKAEKERQKSEADETREAGERRKR</sequence>
<name>RIMM_KORVE</name>
<protein>
    <recommendedName>
        <fullName evidence="1">Ribosome maturation factor RimM</fullName>
    </recommendedName>
</protein>
<dbReference type="EMBL" id="CP000360">
    <property type="protein sequence ID" value="ABF41875.1"/>
    <property type="molecule type" value="Genomic_DNA"/>
</dbReference>
<dbReference type="RefSeq" id="WP_011523676.1">
    <property type="nucleotide sequence ID" value="NC_008009.1"/>
</dbReference>
<dbReference type="SMR" id="Q1IMM5"/>
<dbReference type="STRING" id="204669.Acid345_2874"/>
<dbReference type="EnsemblBacteria" id="ABF41875">
    <property type="protein sequence ID" value="ABF41875"/>
    <property type="gene ID" value="Acid345_2874"/>
</dbReference>
<dbReference type="KEGG" id="aba:Acid345_2874"/>
<dbReference type="eggNOG" id="COG0806">
    <property type="taxonomic scope" value="Bacteria"/>
</dbReference>
<dbReference type="HOGENOM" id="CLU_077636_3_0_0"/>
<dbReference type="OrthoDB" id="9810331at2"/>
<dbReference type="Proteomes" id="UP000002432">
    <property type="component" value="Chromosome"/>
</dbReference>
<dbReference type="GO" id="GO:0005737">
    <property type="term" value="C:cytoplasm"/>
    <property type="evidence" value="ECO:0007669"/>
    <property type="project" value="UniProtKB-SubCell"/>
</dbReference>
<dbReference type="GO" id="GO:0005840">
    <property type="term" value="C:ribosome"/>
    <property type="evidence" value="ECO:0007669"/>
    <property type="project" value="InterPro"/>
</dbReference>
<dbReference type="GO" id="GO:0043022">
    <property type="term" value="F:ribosome binding"/>
    <property type="evidence" value="ECO:0007669"/>
    <property type="project" value="InterPro"/>
</dbReference>
<dbReference type="GO" id="GO:0042274">
    <property type="term" value="P:ribosomal small subunit biogenesis"/>
    <property type="evidence" value="ECO:0007669"/>
    <property type="project" value="UniProtKB-UniRule"/>
</dbReference>
<dbReference type="GO" id="GO:0006364">
    <property type="term" value="P:rRNA processing"/>
    <property type="evidence" value="ECO:0007669"/>
    <property type="project" value="UniProtKB-UniRule"/>
</dbReference>
<dbReference type="Gene3D" id="2.30.30.240">
    <property type="entry name" value="PRC-barrel domain"/>
    <property type="match status" value="1"/>
</dbReference>
<dbReference type="Gene3D" id="2.40.30.60">
    <property type="entry name" value="RimM"/>
    <property type="match status" value="1"/>
</dbReference>
<dbReference type="HAMAP" id="MF_00014">
    <property type="entry name" value="Ribosome_mat_RimM"/>
    <property type="match status" value="1"/>
</dbReference>
<dbReference type="InterPro" id="IPR011033">
    <property type="entry name" value="PRC_barrel-like_sf"/>
</dbReference>
<dbReference type="InterPro" id="IPR056792">
    <property type="entry name" value="PRC_RimM"/>
</dbReference>
<dbReference type="InterPro" id="IPR011961">
    <property type="entry name" value="RimM"/>
</dbReference>
<dbReference type="InterPro" id="IPR002676">
    <property type="entry name" value="RimM_N"/>
</dbReference>
<dbReference type="InterPro" id="IPR036976">
    <property type="entry name" value="RimM_N_sf"/>
</dbReference>
<dbReference type="InterPro" id="IPR009000">
    <property type="entry name" value="Transl_B-barrel_sf"/>
</dbReference>
<dbReference type="NCBIfam" id="TIGR02273">
    <property type="entry name" value="16S_RimM"/>
    <property type="match status" value="1"/>
</dbReference>
<dbReference type="PANTHER" id="PTHR33692">
    <property type="entry name" value="RIBOSOME MATURATION FACTOR RIMM"/>
    <property type="match status" value="1"/>
</dbReference>
<dbReference type="PANTHER" id="PTHR33692:SF1">
    <property type="entry name" value="RIBOSOME MATURATION FACTOR RIMM"/>
    <property type="match status" value="1"/>
</dbReference>
<dbReference type="Pfam" id="PF24986">
    <property type="entry name" value="PRC_RimM"/>
    <property type="match status" value="1"/>
</dbReference>
<dbReference type="Pfam" id="PF01782">
    <property type="entry name" value="RimM"/>
    <property type="match status" value="1"/>
</dbReference>
<dbReference type="SUPFAM" id="SSF50346">
    <property type="entry name" value="PRC-barrel domain"/>
    <property type="match status" value="1"/>
</dbReference>
<dbReference type="SUPFAM" id="SSF50447">
    <property type="entry name" value="Translation proteins"/>
    <property type="match status" value="1"/>
</dbReference>
<proteinExistence type="inferred from homology"/>
<accession>Q1IMM5</accession>
<evidence type="ECO:0000255" key="1">
    <source>
        <dbReference type="HAMAP-Rule" id="MF_00014"/>
    </source>
</evidence>
<evidence type="ECO:0000256" key="2">
    <source>
        <dbReference type="SAM" id="MobiDB-lite"/>
    </source>
</evidence>
<gene>
    <name evidence="1" type="primary">rimM</name>
    <name type="ordered locus">Acid345_2874</name>
</gene>
<keyword id="KW-0143">Chaperone</keyword>
<keyword id="KW-0963">Cytoplasm</keyword>
<keyword id="KW-1185">Reference proteome</keyword>
<keyword id="KW-0690">Ribosome biogenesis</keyword>
<keyword id="KW-0698">rRNA processing</keyword>